<evidence type="ECO:0000255" key="1">
    <source>
        <dbReference type="HAMAP-Rule" id="MF_00693"/>
    </source>
</evidence>
<organism>
    <name type="scientific">Lachnospira eligens (strain ATCC 27750 / DSM 3376 / VPI C15-48 / C15-B4)</name>
    <name type="common">Eubacterium eligens</name>
    <dbReference type="NCBI Taxonomy" id="515620"/>
    <lineage>
        <taxon>Bacteria</taxon>
        <taxon>Bacillati</taxon>
        <taxon>Bacillota</taxon>
        <taxon>Clostridia</taxon>
        <taxon>Lachnospirales</taxon>
        <taxon>Lachnospiraceae</taxon>
        <taxon>Lachnospira</taxon>
    </lineage>
</organism>
<keyword id="KW-0963">Cytoplasm</keyword>
<keyword id="KW-0238">DNA-binding</keyword>
<keyword id="KW-1185">Reference proteome</keyword>
<keyword id="KW-0804">Transcription</keyword>
<keyword id="KW-0805">Transcription regulation</keyword>
<accession>C4Z5P5</accession>
<sequence>MSGHSKFANIAHKKAANDAAKGKIFTRLGKELMIAVKEGGPDVNNNSKLRQVVAKCKAANMPNDTIDRAIKKAASNDMSNYESVTYEGYGPNGTAIIVEALTDNRNRAASNIRSAFTKGGGNVGTPGCVSFMFDNKGQMIVDKEEYTGDADELMMLALDAGADDFNEEEDCYEILTSPEEFDAVNQALADAGVTFASAEVTMIPQTTVDLTSEDDIKKMNRILGLLDEDDDVQNVYHNWNEPEEDEE</sequence>
<dbReference type="EMBL" id="CP001104">
    <property type="protein sequence ID" value="ACR71904.1"/>
    <property type="molecule type" value="Genomic_DNA"/>
</dbReference>
<dbReference type="RefSeq" id="WP_012739140.1">
    <property type="nucleotide sequence ID" value="NC_012778.1"/>
</dbReference>
<dbReference type="SMR" id="C4Z5P5"/>
<dbReference type="STRING" id="515620.EUBELI_00902"/>
<dbReference type="GeneID" id="41355637"/>
<dbReference type="KEGG" id="eel:EUBELI_00902"/>
<dbReference type="eggNOG" id="COG0217">
    <property type="taxonomic scope" value="Bacteria"/>
</dbReference>
<dbReference type="HOGENOM" id="CLU_062974_3_0_9"/>
<dbReference type="Proteomes" id="UP000001476">
    <property type="component" value="Chromosome"/>
</dbReference>
<dbReference type="GO" id="GO:0005829">
    <property type="term" value="C:cytosol"/>
    <property type="evidence" value="ECO:0007669"/>
    <property type="project" value="TreeGrafter"/>
</dbReference>
<dbReference type="GO" id="GO:0003677">
    <property type="term" value="F:DNA binding"/>
    <property type="evidence" value="ECO:0007669"/>
    <property type="project" value="UniProtKB-UniRule"/>
</dbReference>
<dbReference type="GO" id="GO:0006355">
    <property type="term" value="P:regulation of DNA-templated transcription"/>
    <property type="evidence" value="ECO:0007669"/>
    <property type="project" value="UniProtKB-UniRule"/>
</dbReference>
<dbReference type="FunFam" id="1.10.10.200:FF:000002">
    <property type="entry name" value="Probable transcriptional regulatory protein CLM62_37755"/>
    <property type="match status" value="1"/>
</dbReference>
<dbReference type="FunFam" id="3.30.70.980:FF:000002">
    <property type="entry name" value="Probable transcriptional regulatory protein YebC"/>
    <property type="match status" value="1"/>
</dbReference>
<dbReference type="Gene3D" id="1.10.10.200">
    <property type="match status" value="1"/>
</dbReference>
<dbReference type="Gene3D" id="3.30.70.980">
    <property type="match status" value="2"/>
</dbReference>
<dbReference type="HAMAP" id="MF_00693">
    <property type="entry name" value="Transcrip_reg_TACO1"/>
    <property type="match status" value="1"/>
</dbReference>
<dbReference type="InterPro" id="IPR017856">
    <property type="entry name" value="Integrase-like_N"/>
</dbReference>
<dbReference type="InterPro" id="IPR048300">
    <property type="entry name" value="TACO1_YebC-like_2nd/3rd_dom"/>
</dbReference>
<dbReference type="InterPro" id="IPR049083">
    <property type="entry name" value="TACO1_YebC_N"/>
</dbReference>
<dbReference type="InterPro" id="IPR002876">
    <property type="entry name" value="Transcrip_reg_TACO1-like"/>
</dbReference>
<dbReference type="InterPro" id="IPR026564">
    <property type="entry name" value="Transcrip_reg_TACO1-like_dom3"/>
</dbReference>
<dbReference type="InterPro" id="IPR029072">
    <property type="entry name" value="YebC-like"/>
</dbReference>
<dbReference type="NCBIfam" id="NF001030">
    <property type="entry name" value="PRK00110.1"/>
    <property type="match status" value="1"/>
</dbReference>
<dbReference type="NCBIfam" id="NF009044">
    <property type="entry name" value="PRK12378.1"/>
    <property type="match status" value="1"/>
</dbReference>
<dbReference type="NCBIfam" id="TIGR01033">
    <property type="entry name" value="YebC/PmpR family DNA-binding transcriptional regulator"/>
    <property type="match status" value="1"/>
</dbReference>
<dbReference type="PANTHER" id="PTHR12532:SF6">
    <property type="entry name" value="TRANSCRIPTIONAL REGULATORY PROTEIN YEBC-RELATED"/>
    <property type="match status" value="1"/>
</dbReference>
<dbReference type="PANTHER" id="PTHR12532">
    <property type="entry name" value="TRANSLATIONAL ACTIVATOR OF CYTOCHROME C OXIDASE 1"/>
    <property type="match status" value="1"/>
</dbReference>
<dbReference type="Pfam" id="PF20772">
    <property type="entry name" value="TACO1_YebC_N"/>
    <property type="match status" value="1"/>
</dbReference>
<dbReference type="Pfam" id="PF01709">
    <property type="entry name" value="Transcrip_reg"/>
    <property type="match status" value="1"/>
</dbReference>
<dbReference type="SUPFAM" id="SSF75625">
    <property type="entry name" value="YebC-like"/>
    <property type="match status" value="1"/>
</dbReference>
<feature type="chain" id="PRO_1000212607" description="Probable transcriptional regulatory protein EUBELI_00902">
    <location>
        <begin position="1"/>
        <end position="247"/>
    </location>
</feature>
<protein>
    <recommendedName>
        <fullName evidence="1">Probable transcriptional regulatory protein EUBELI_00902</fullName>
    </recommendedName>
</protein>
<comment type="subcellular location">
    <subcellularLocation>
        <location evidence="1">Cytoplasm</location>
    </subcellularLocation>
</comment>
<comment type="similarity">
    <text evidence="1">Belongs to the TACO1 family.</text>
</comment>
<name>Y902_LACE2</name>
<proteinExistence type="inferred from homology"/>
<gene>
    <name type="ordered locus">EUBELI_00902</name>
</gene>
<reference key="1">
    <citation type="journal article" date="2009" name="Proc. Natl. Acad. Sci. U.S.A.">
        <title>Characterizing a model human gut microbiota composed of members of its two dominant bacterial phyla.</title>
        <authorList>
            <person name="Mahowald M.A."/>
            <person name="Rey F.E."/>
            <person name="Seedorf H."/>
            <person name="Turnbaugh P.J."/>
            <person name="Fulton R.S."/>
            <person name="Wollam A."/>
            <person name="Shah N."/>
            <person name="Wang C."/>
            <person name="Magrini V."/>
            <person name="Wilson R.K."/>
            <person name="Cantarel B.L."/>
            <person name="Coutinho P.M."/>
            <person name="Henrissat B."/>
            <person name="Crock L.W."/>
            <person name="Russell A."/>
            <person name="Verberkmoes N.C."/>
            <person name="Hettich R.L."/>
            <person name="Gordon J.I."/>
        </authorList>
    </citation>
    <scope>NUCLEOTIDE SEQUENCE [LARGE SCALE GENOMIC DNA]</scope>
    <source>
        <strain>ATCC 27750 / DSM 3376 / VPI C15-48 / C15-B4</strain>
    </source>
</reference>